<reference key="1">
    <citation type="journal article" date="1991" name="J. Biol. Chem.">
        <title>Purification and amino acid sequence of a bitter gourd inhibitor against an acidic amino acid-specific endopeptidase of Streptomyces griseus.</title>
        <authorList>
            <person name="Ogata F."/>
            <person name="Miyata T."/>
            <person name="Fujii N."/>
            <person name="Yoshida N."/>
            <person name="Noda K."/>
            <person name="Makisumi S."/>
            <person name="Ito A."/>
        </authorList>
    </citation>
    <scope>PROTEIN SEQUENCE</scope>
    <scope>ACETYLATION AT SER-1</scope>
    <source>
        <tissue>Seed</tissue>
    </source>
</reference>
<evidence type="ECO:0000250" key="1"/>
<evidence type="ECO:0000269" key="2">
    <source>
    </source>
</evidence>
<evidence type="ECO:0000305" key="3"/>
<sequence length="68" mass="7383">SQCQGKRSWPQLVGSTGAAAKAVIERENPRVRAVIVRVGSPVTADFRCDRVRVWVTERGIVARPPAIG</sequence>
<feature type="chain" id="PRO_0000217644" description="Glu S.griseus protease inhibitor">
    <location>
        <begin position="1"/>
        <end position="68"/>
    </location>
</feature>
<feature type="site" description="Reactive bond" evidence="1">
    <location>
        <begin position="44"/>
        <end position="45"/>
    </location>
</feature>
<feature type="modified residue" description="N-acetylserine" evidence="2">
    <location>
        <position position="1"/>
    </location>
</feature>
<feature type="disulfide bond" evidence="3">
    <location>
        <begin position="3"/>
        <end position="48"/>
    </location>
</feature>
<comment type="function">
    <text>Competitively inhibits Glu S.griseus protease by forming probably a 1:1 complex. BGIA has no inhibitory activity against 2 other acidic amino acid-specific endopeptidases (S.aureus protease V8 and B.subtilis proteinase), chymotrypsin, trypsin, pancreatic elastase, and papain, although subtilisin Carlsberg was strongly inhibited.</text>
</comment>
<comment type="similarity">
    <text evidence="3">Belongs to the protease inhibitor I13 (potato type I serine protease inhibitor) family.</text>
</comment>
<name>BGIA_MOMCH</name>
<organism>
    <name type="scientific">Momordica charantia</name>
    <name type="common">Bitter gourd</name>
    <name type="synonym">Balsam pear</name>
    <dbReference type="NCBI Taxonomy" id="3673"/>
    <lineage>
        <taxon>Eukaryota</taxon>
        <taxon>Viridiplantae</taxon>
        <taxon>Streptophyta</taxon>
        <taxon>Embryophyta</taxon>
        <taxon>Tracheophyta</taxon>
        <taxon>Spermatophyta</taxon>
        <taxon>Magnoliopsida</taxon>
        <taxon>eudicotyledons</taxon>
        <taxon>Gunneridae</taxon>
        <taxon>Pentapetalae</taxon>
        <taxon>rosids</taxon>
        <taxon>fabids</taxon>
        <taxon>Cucurbitales</taxon>
        <taxon>Cucurbitaceae</taxon>
        <taxon>Momordiceae</taxon>
        <taxon>Momordica</taxon>
    </lineage>
</organism>
<accession>P24076</accession>
<protein>
    <recommendedName>
        <fullName>Glu S.griseus protease inhibitor</fullName>
    </recommendedName>
    <alternativeName>
        <fullName>BGIA</fullName>
    </alternativeName>
</protein>
<keyword id="KW-0007">Acetylation</keyword>
<keyword id="KW-0903">Direct protein sequencing</keyword>
<keyword id="KW-1015">Disulfide bond</keyword>
<keyword id="KW-0646">Protease inhibitor</keyword>
<keyword id="KW-1185">Reference proteome</keyword>
<keyword id="KW-0722">Serine protease inhibitor</keyword>
<dbReference type="PIR" id="A41174">
    <property type="entry name" value="A41174"/>
</dbReference>
<dbReference type="SMR" id="P24076"/>
<dbReference type="MEROPS" id="I13.004"/>
<dbReference type="iPTMnet" id="P24076"/>
<dbReference type="Proteomes" id="UP000504603">
    <property type="component" value="Unplaced"/>
</dbReference>
<dbReference type="GO" id="GO:0004867">
    <property type="term" value="F:serine-type endopeptidase inhibitor activity"/>
    <property type="evidence" value="ECO:0007669"/>
    <property type="project" value="UniProtKB-KW"/>
</dbReference>
<dbReference type="GO" id="GO:0009611">
    <property type="term" value="P:response to wounding"/>
    <property type="evidence" value="ECO:0007669"/>
    <property type="project" value="InterPro"/>
</dbReference>
<dbReference type="Gene3D" id="3.30.10.10">
    <property type="entry name" value="Trypsin Inhibitor V, subunit A"/>
    <property type="match status" value="1"/>
</dbReference>
<dbReference type="InterPro" id="IPR000864">
    <property type="entry name" value="Prot_inh_pot1"/>
</dbReference>
<dbReference type="InterPro" id="IPR036354">
    <property type="entry name" value="Prot_inh_pot1_sf"/>
</dbReference>
<dbReference type="PANTHER" id="PTHR33091">
    <property type="entry name" value="PROTEIN, PUTATIVE, EXPRESSED-RELATED"/>
    <property type="match status" value="1"/>
</dbReference>
<dbReference type="PANTHER" id="PTHR33091:SF109">
    <property type="entry name" value="PROTEINASE INHIBITOR"/>
    <property type="match status" value="1"/>
</dbReference>
<dbReference type="Pfam" id="PF00280">
    <property type="entry name" value="potato_inhibit"/>
    <property type="match status" value="1"/>
</dbReference>
<dbReference type="PRINTS" id="PR00292">
    <property type="entry name" value="POTATOINHBTR"/>
</dbReference>
<dbReference type="SUPFAM" id="SSF54654">
    <property type="entry name" value="CI-2 family of serine protease inhibitors"/>
    <property type="match status" value="1"/>
</dbReference>
<dbReference type="PROSITE" id="PS00285">
    <property type="entry name" value="POTATO_INHIBITOR"/>
    <property type="match status" value="1"/>
</dbReference>
<proteinExistence type="evidence at protein level"/>